<name>TAF11_ARATH</name>
<proteinExistence type="evidence at protein level"/>
<sequence>MKHSKDPFEAAIEEEQEESPPESPVGGGGGGDGSEDGRIEIDQTQDEDERPVDVRRPMKKAKTSVVVTEAKNKDKDEDDEEEEENMDVELTKYPTSSDPAKMAKMQTILSQFTEDQMSRYESFRRSALQRPQMKKLLIGVTGSQKIGMPMIIVACGIAKMFVGELVETARVVMAERKESGPIRPCHIRESYRRLKLEGKVPKRSVPRLFR</sequence>
<dbReference type="EMBL" id="AY463612">
    <property type="protein sequence ID" value="AAR28014.1"/>
    <property type="molecule type" value="mRNA"/>
</dbReference>
<dbReference type="EMBL" id="AF238326">
    <property type="protein sequence ID" value="AAF65405.1"/>
    <property type="molecule type" value="mRNA"/>
</dbReference>
<dbReference type="EMBL" id="AL022224">
    <property type="protein sequence ID" value="CAA18253.1"/>
    <property type="status" value="ALT_SEQ"/>
    <property type="molecule type" value="Genomic_DNA"/>
</dbReference>
<dbReference type="EMBL" id="AL161552">
    <property type="protein sequence ID" value="CAB79028.1"/>
    <property type="status" value="ALT_SEQ"/>
    <property type="molecule type" value="Genomic_DNA"/>
</dbReference>
<dbReference type="EMBL" id="CP002687">
    <property type="protein sequence ID" value="AEE84298.1"/>
    <property type="molecule type" value="Genomic_DNA"/>
</dbReference>
<dbReference type="EMBL" id="AF370141">
    <property type="protein sequence ID" value="AAK43956.1"/>
    <property type="molecule type" value="mRNA"/>
</dbReference>
<dbReference type="EMBL" id="AY051084">
    <property type="protein sequence ID" value="AAK93761.1"/>
    <property type="molecule type" value="mRNA"/>
</dbReference>
<dbReference type="PIR" id="T05336">
    <property type="entry name" value="T05336"/>
</dbReference>
<dbReference type="RefSeq" id="NP_193761.1">
    <property type="nucleotide sequence ID" value="NM_118147.5"/>
</dbReference>
<dbReference type="SMR" id="Q9M565"/>
<dbReference type="BioGRID" id="13067">
    <property type="interactions" value="14"/>
</dbReference>
<dbReference type="FunCoup" id="Q9M565">
    <property type="interactions" value="3744"/>
</dbReference>
<dbReference type="IntAct" id="Q9M565">
    <property type="interactions" value="16"/>
</dbReference>
<dbReference type="STRING" id="3702.Q9M565"/>
<dbReference type="iPTMnet" id="Q9M565"/>
<dbReference type="PaxDb" id="3702-AT4G20280.1"/>
<dbReference type="ProteomicsDB" id="233005"/>
<dbReference type="EnsemblPlants" id="AT4G20280.1">
    <property type="protein sequence ID" value="AT4G20280.1"/>
    <property type="gene ID" value="AT4G20280"/>
</dbReference>
<dbReference type="GeneID" id="827775"/>
<dbReference type="Gramene" id="AT4G20280.1">
    <property type="protein sequence ID" value="AT4G20280.1"/>
    <property type="gene ID" value="AT4G20280"/>
</dbReference>
<dbReference type="KEGG" id="ath:AT4G20280"/>
<dbReference type="Araport" id="AT4G20280"/>
<dbReference type="TAIR" id="AT4G20280">
    <property type="gene designation" value="TAF11"/>
</dbReference>
<dbReference type="eggNOG" id="KOG3219">
    <property type="taxonomic scope" value="Eukaryota"/>
</dbReference>
<dbReference type="HOGENOM" id="CLU_088696_1_0_1"/>
<dbReference type="InParanoid" id="Q9M565"/>
<dbReference type="OMA" id="MQRYEVF"/>
<dbReference type="PhylomeDB" id="Q9M565"/>
<dbReference type="PRO" id="PR:Q9M565"/>
<dbReference type="Proteomes" id="UP000006548">
    <property type="component" value="Chromosome 4"/>
</dbReference>
<dbReference type="ExpressionAtlas" id="Q9M565">
    <property type="expression patterns" value="baseline and differential"/>
</dbReference>
<dbReference type="GO" id="GO:0005669">
    <property type="term" value="C:transcription factor TFIID complex"/>
    <property type="evidence" value="ECO:0007669"/>
    <property type="project" value="InterPro"/>
</dbReference>
<dbReference type="GO" id="GO:0046982">
    <property type="term" value="F:protein heterodimerization activity"/>
    <property type="evidence" value="ECO:0007669"/>
    <property type="project" value="InterPro"/>
</dbReference>
<dbReference type="GO" id="GO:0051123">
    <property type="term" value="P:RNA polymerase II preinitiation complex assembly"/>
    <property type="evidence" value="ECO:0007669"/>
    <property type="project" value="InterPro"/>
</dbReference>
<dbReference type="CDD" id="cd08048">
    <property type="entry name" value="HFD_TAF11"/>
    <property type="match status" value="1"/>
</dbReference>
<dbReference type="FunFam" id="1.10.20.10:FF:000055">
    <property type="entry name" value="Transcription initiation factor TFIID subunit 11"/>
    <property type="match status" value="1"/>
</dbReference>
<dbReference type="Gene3D" id="1.10.20.10">
    <property type="entry name" value="Histone, subunit A"/>
    <property type="match status" value="1"/>
</dbReference>
<dbReference type="InterPro" id="IPR009072">
    <property type="entry name" value="Histone-fold"/>
</dbReference>
<dbReference type="InterPro" id="IPR045127">
    <property type="entry name" value="TAF11-like"/>
</dbReference>
<dbReference type="InterPro" id="IPR006809">
    <property type="entry name" value="TAFII28_dom"/>
</dbReference>
<dbReference type="PANTHER" id="PTHR13218:SF8">
    <property type="entry name" value="TRANSCRIPTION INITIATION FACTOR TFIID SUBUNIT 11"/>
    <property type="match status" value="1"/>
</dbReference>
<dbReference type="PANTHER" id="PTHR13218">
    <property type="entry name" value="TRANSCRIPTION INITIATION FACTOR TFIID SUBUNIT 11-RELATED"/>
    <property type="match status" value="1"/>
</dbReference>
<dbReference type="Pfam" id="PF04719">
    <property type="entry name" value="TAFII28"/>
    <property type="match status" value="1"/>
</dbReference>
<dbReference type="SUPFAM" id="SSF47113">
    <property type="entry name" value="Histone-fold"/>
    <property type="match status" value="1"/>
</dbReference>
<accession>Q9M565</accession>
<accession>O65441</accession>
<reference key="1">
    <citation type="journal article" date="2004" name="Gene">
        <title>TBP-associated factors in Arabidopsis.</title>
        <authorList>
            <person name="Lago C."/>
            <person name="Clerici E."/>
            <person name="Mizzi L."/>
            <person name="Colombo L."/>
            <person name="Kater M.M."/>
        </authorList>
    </citation>
    <scope>NUCLEOTIDE SEQUENCE [MRNA]</scope>
    <scope>IDENTIFICATION</scope>
    <scope>NOMENCLATURE</scope>
    <scope>TISSUE SPECIFICITY</scope>
</reference>
<reference key="2">
    <citation type="journal article" date="2007" name="Plant Mol. Biol.">
        <title>Yeast two-hybrid map of Arabidopsis TFIID.</title>
        <authorList>
            <person name="Lawit S.J."/>
            <person name="O'Grady K."/>
            <person name="Gurley W.B."/>
            <person name="Czarnecka-Verner E."/>
        </authorList>
    </citation>
    <scope>NUCLEOTIDE SEQUENCE [MRNA]</scope>
    <scope>INTERACTION WITH TAF12; TAF12B AND TAF13</scope>
    <source>
        <strain>cv. Columbia</strain>
    </source>
</reference>
<reference key="3">
    <citation type="journal article" date="1999" name="Nature">
        <title>Sequence and analysis of chromosome 4 of the plant Arabidopsis thaliana.</title>
        <authorList>
            <person name="Mayer K.F.X."/>
            <person name="Schueller C."/>
            <person name="Wambutt R."/>
            <person name="Murphy G."/>
            <person name="Volckaert G."/>
            <person name="Pohl T."/>
            <person name="Duesterhoeft A."/>
            <person name="Stiekema W."/>
            <person name="Entian K.-D."/>
            <person name="Terryn N."/>
            <person name="Harris B."/>
            <person name="Ansorge W."/>
            <person name="Brandt P."/>
            <person name="Grivell L.A."/>
            <person name="Rieger M."/>
            <person name="Weichselgartner M."/>
            <person name="de Simone V."/>
            <person name="Obermaier B."/>
            <person name="Mache R."/>
            <person name="Mueller M."/>
            <person name="Kreis M."/>
            <person name="Delseny M."/>
            <person name="Puigdomenech P."/>
            <person name="Watson M."/>
            <person name="Schmidtheini T."/>
            <person name="Reichert B."/>
            <person name="Portetelle D."/>
            <person name="Perez-Alonso M."/>
            <person name="Boutry M."/>
            <person name="Bancroft I."/>
            <person name="Vos P."/>
            <person name="Hoheisel J."/>
            <person name="Zimmermann W."/>
            <person name="Wedler H."/>
            <person name="Ridley P."/>
            <person name="Langham S.-A."/>
            <person name="McCullagh B."/>
            <person name="Bilham L."/>
            <person name="Robben J."/>
            <person name="van der Schueren J."/>
            <person name="Grymonprez B."/>
            <person name="Chuang Y.-J."/>
            <person name="Vandenbussche F."/>
            <person name="Braeken M."/>
            <person name="Weltjens I."/>
            <person name="Voet M."/>
            <person name="Bastiaens I."/>
            <person name="Aert R."/>
            <person name="Defoor E."/>
            <person name="Weitzenegger T."/>
            <person name="Bothe G."/>
            <person name="Ramsperger U."/>
            <person name="Hilbert H."/>
            <person name="Braun M."/>
            <person name="Holzer E."/>
            <person name="Brandt A."/>
            <person name="Peters S."/>
            <person name="van Staveren M."/>
            <person name="Dirkse W."/>
            <person name="Mooijman P."/>
            <person name="Klein Lankhorst R."/>
            <person name="Rose M."/>
            <person name="Hauf J."/>
            <person name="Koetter P."/>
            <person name="Berneiser S."/>
            <person name="Hempel S."/>
            <person name="Feldpausch M."/>
            <person name="Lamberth S."/>
            <person name="Van den Daele H."/>
            <person name="De Keyser A."/>
            <person name="Buysshaert C."/>
            <person name="Gielen J."/>
            <person name="Villarroel R."/>
            <person name="De Clercq R."/>
            <person name="van Montagu M."/>
            <person name="Rogers J."/>
            <person name="Cronin A."/>
            <person name="Quail M.A."/>
            <person name="Bray-Allen S."/>
            <person name="Clark L."/>
            <person name="Doggett J."/>
            <person name="Hall S."/>
            <person name="Kay M."/>
            <person name="Lennard N."/>
            <person name="McLay K."/>
            <person name="Mayes R."/>
            <person name="Pettett A."/>
            <person name="Rajandream M.A."/>
            <person name="Lyne M."/>
            <person name="Benes V."/>
            <person name="Rechmann S."/>
            <person name="Borkova D."/>
            <person name="Bloecker H."/>
            <person name="Scharfe M."/>
            <person name="Grimm M."/>
            <person name="Loehnert T.-H."/>
            <person name="Dose S."/>
            <person name="de Haan M."/>
            <person name="Maarse A.C."/>
            <person name="Schaefer M."/>
            <person name="Mueller-Auer S."/>
            <person name="Gabel C."/>
            <person name="Fuchs M."/>
            <person name="Fartmann B."/>
            <person name="Granderath K."/>
            <person name="Dauner D."/>
            <person name="Herzl A."/>
            <person name="Neumann S."/>
            <person name="Argiriou A."/>
            <person name="Vitale D."/>
            <person name="Liguori R."/>
            <person name="Piravandi E."/>
            <person name="Massenet O."/>
            <person name="Quigley F."/>
            <person name="Clabauld G."/>
            <person name="Muendlein A."/>
            <person name="Felber R."/>
            <person name="Schnabl S."/>
            <person name="Hiller R."/>
            <person name="Schmidt W."/>
            <person name="Lecharny A."/>
            <person name="Aubourg S."/>
            <person name="Chefdor F."/>
            <person name="Cooke R."/>
            <person name="Berger C."/>
            <person name="Monfort A."/>
            <person name="Casacuberta E."/>
            <person name="Gibbons T."/>
            <person name="Weber N."/>
            <person name="Vandenbol M."/>
            <person name="Bargues M."/>
            <person name="Terol J."/>
            <person name="Torres A."/>
            <person name="Perez-Perez A."/>
            <person name="Purnelle B."/>
            <person name="Bent E."/>
            <person name="Johnson S."/>
            <person name="Tacon D."/>
            <person name="Jesse T."/>
            <person name="Heijnen L."/>
            <person name="Schwarz S."/>
            <person name="Scholler P."/>
            <person name="Heber S."/>
            <person name="Francs P."/>
            <person name="Bielke C."/>
            <person name="Frishman D."/>
            <person name="Haase D."/>
            <person name="Lemcke K."/>
            <person name="Mewes H.-W."/>
            <person name="Stocker S."/>
            <person name="Zaccaria P."/>
            <person name="Bevan M."/>
            <person name="Wilson R.K."/>
            <person name="de la Bastide M."/>
            <person name="Habermann K."/>
            <person name="Parnell L."/>
            <person name="Dedhia N."/>
            <person name="Gnoj L."/>
            <person name="Schutz K."/>
            <person name="Huang E."/>
            <person name="Spiegel L."/>
            <person name="Sekhon M."/>
            <person name="Murray J."/>
            <person name="Sheet P."/>
            <person name="Cordes M."/>
            <person name="Abu-Threideh J."/>
            <person name="Stoneking T."/>
            <person name="Kalicki J."/>
            <person name="Graves T."/>
            <person name="Harmon G."/>
            <person name="Edwards J."/>
            <person name="Latreille P."/>
            <person name="Courtney L."/>
            <person name="Cloud J."/>
            <person name="Abbott A."/>
            <person name="Scott K."/>
            <person name="Johnson D."/>
            <person name="Minx P."/>
            <person name="Bentley D."/>
            <person name="Fulton B."/>
            <person name="Miller N."/>
            <person name="Greco T."/>
            <person name="Kemp K."/>
            <person name="Kramer J."/>
            <person name="Fulton L."/>
            <person name="Mardis E."/>
            <person name="Dante M."/>
            <person name="Pepin K."/>
            <person name="Hillier L.W."/>
            <person name="Nelson J."/>
            <person name="Spieth J."/>
            <person name="Ryan E."/>
            <person name="Andrews S."/>
            <person name="Geisel C."/>
            <person name="Layman D."/>
            <person name="Du H."/>
            <person name="Ali J."/>
            <person name="Berghoff A."/>
            <person name="Jones K."/>
            <person name="Drone K."/>
            <person name="Cotton M."/>
            <person name="Joshu C."/>
            <person name="Antonoiu B."/>
            <person name="Zidanic M."/>
            <person name="Strong C."/>
            <person name="Sun H."/>
            <person name="Lamar B."/>
            <person name="Yordan C."/>
            <person name="Ma P."/>
            <person name="Zhong J."/>
            <person name="Preston R."/>
            <person name="Vil D."/>
            <person name="Shekher M."/>
            <person name="Matero A."/>
            <person name="Shah R."/>
            <person name="Swaby I.K."/>
            <person name="O'Shaughnessy A."/>
            <person name="Rodriguez M."/>
            <person name="Hoffman J."/>
            <person name="Till S."/>
            <person name="Granat S."/>
            <person name="Shohdy N."/>
            <person name="Hasegawa A."/>
            <person name="Hameed A."/>
            <person name="Lodhi M."/>
            <person name="Johnson A."/>
            <person name="Chen E."/>
            <person name="Marra M.A."/>
            <person name="Martienssen R."/>
            <person name="McCombie W.R."/>
        </authorList>
    </citation>
    <scope>NUCLEOTIDE SEQUENCE [LARGE SCALE GENOMIC DNA]</scope>
    <source>
        <strain>cv. Columbia</strain>
    </source>
</reference>
<reference key="4">
    <citation type="journal article" date="2017" name="Plant J.">
        <title>Araport11: a complete reannotation of the Arabidopsis thaliana reference genome.</title>
        <authorList>
            <person name="Cheng C.Y."/>
            <person name="Krishnakumar V."/>
            <person name="Chan A.P."/>
            <person name="Thibaud-Nissen F."/>
            <person name="Schobel S."/>
            <person name="Town C.D."/>
        </authorList>
    </citation>
    <scope>GENOME REANNOTATION</scope>
    <source>
        <strain>cv. Columbia</strain>
    </source>
</reference>
<reference key="5">
    <citation type="journal article" date="2003" name="Science">
        <title>Empirical analysis of transcriptional activity in the Arabidopsis genome.</title>
        <authorList>
            <person name="Yamada K."/>
            <person name="Lim J."/>
            <person name="Dale J.M."/>
            <person name="Chen H."/>
            <person name="Shinn P."/>
            <person name="Palm C.J."/>
            <person name="Southwick A.M."/>
            <person name="Wu H.C."/>
            <person name="Kim C.J."/>
            <person name="Nguyen M."/>
            <person name="Pham P.K."/>
            <person name="Cheuk R.F."/>
            <person name="Karlin-Newmann G."/>
            <person name="Liu S.X."/>
            <person name="Lam B."/>
            <person name="Sakano H."/>
            <person name="Wu T."/>
            <person name="Yu G."/>
            <person name="Miranda M."/>
            <person name="Quach H.L."/>
            <person name="Tripp M."/>
            <person name="Chang C.H."/>
            <person name="Lee J.M."/>
            <person name="Toriumi M.J."/>
            <person name="Chan M.M."/>
            <person name="Tang C.C."/>
            <person name="Onodera C.S."/>
            <person name="Deng J.M."/>
            <person name="Akiyama K."/>
            <person name="Ansari Y."/>
            <person name="Arakawa T."/>
            <person name="Banh J."/>
            <person name="Banno F."/>
            <person name="Bowser L."/>
            <person name="Brooks S.Y."/>
            <person name="Carninci P."/>
            <person name="Chao Q."/>
            <person name="Choy N."/>
            <person name="Enju A."/>
            <person name="Goldsmith A.D."/>
            <person name="Gurjal M."/>
            <person name="Hansen N.F."/>
            <person name="Hayashizaki Y."/>
            <person name="Johnson-Hopson C."/>
            <person name="Hsuan V.W."/>
            <person name="Iida K."/>
            <person name="Karnes M."/>
            <person name="Khan S."/>
            <person name="Koesema E."/>
            <person name="Ishida J."/>
            <person name="Jiang P.X."/>
            <person name="Jones T."/>
            <person name="Kawai J."/>
            <person name="Kamiya A."/>
            <person name="Meyers C."/>
            <person name="Nakajima M."/>
            <person name="Narusaka M."/>
            <person name="Seki M."/>
            <person name="Sakurai T."/>
            <person name="Satou M."/>
            <person name="Tamse R."/>
            <person name="Vaysberg M."/>
            <person name="Wallender E.K."/>
            <person name="Wong C."/>
            <person name="Yamamura Y."/>
            <person name="Yuan S."/>
            <person name="Shinozaki K."/>
            <person name="Davis R.W."/>
            <person name="Theologis A."/>
            <person name="Ecker J.R."/>
        </authorList>
    </citation>
    <scope>NUCLEOTIDE SEQUENCE [LARGE SCALE MRNA]</scope>
    <source>
        <strain>cv. Columbia</strain>
    </source>
</reference>
<feature type="chain" id="PRO_0000424048" description="Transcription initiation factor TFIID subunit 11">
    <location>
        <begin position="1"/>
        <end position="210"/>
    </location>
</feature>
<feature type="domain" description="Histone-fold">
    <location>
        <begin position="112"/>
        <end position="201"/>
    </location>
</feature>
<feature type="region of interest" description="Disordered" evidence="2">
    <location>
        <begin position="1"/>
        <end position="98"/>
    </location>
</feature>
<feature type="compositionally biased region" description="Acidic residues" evidence="2">
    <location>
        <begin position="11"/>
        <end position="20"/>
    </location>
</feature>
<feature type="compositionally biased region" description="Acidic residues" evidence="2">
    <location>
        <begin position="76"/>
        <end position="87"/>
    </location>
</feature>
<protein>
    <recommendedName>
        <fullName>Transcription initiation factor TFIID subunit 11</fullName>
    </recommendedName>
    <alternativeName>
        <fullName>TBP-associated factor 11</fullName>
        <shortName>AtTAF11</shortName>
    </alternativeName>
</protein>
<evidence type="ECO:0000250" key="1"/>
<evidence type="ECO:0000256" key="2">
    <source>
        <dbReference type="SAM" id="MobiDB-lite"/>
    </source>
</evidence>
<evidence type="ECO:0000269" key="3">
    <source>
    </source>
</evidence>
<evidence type="ECO:0000269" key="4">
    <source>
    </source>
</evidence>
<evidence type="ECO:0000305" key="5"/>
<keyword id="KW-0010">Activator</keyword>
<keyword id="KW-0539">Nucleus</keyword>
<keyword id="KW-1185">Reference proteome</keyword>
<keyword id="KW-0804">Transcription</keyword>
<keyword id="KW-0805">Transcription regulation</keyword>
<organism>
    <name type="scientific">Arabidopsis thaliana</name>
    <name type="common">Mouse-ear cress</name>
    <dbReference type="NCBI Taxonomy" id="3702"/>
    <lineage>
        <taxon>Eukaryota</taxon>
        <taxon>Viridiplantae</taxon>
        <taxon>Streptophyta</taxon>
        <taxon>Embryophyta</taxon>
        <taxon>Tracheophyta</taxon>
        <taxon>Spermatophyta</taxon>
        <taxon>Magnoliopsida</taxon>
        <taxon>eudicotyledons</taxon>
        <taxon>Gunneridae</taxon>
        <taxon>Pentapetalae</taxon>
        <taxon>rosids</taxon>
        <taxon>malvids</taxon>
        <taxon>Brassicales</taxon>
        <taxon>Brassicaceae</taxon>
        <taxon>Camelineae</taxon>
        <taxon>Arabidopsis</taxon>
    </lineage>
</organism>
<gene>
    <name type="primary">TAF11</name>
    <name type="ordered locus">At4g20280</name>
    <name type="ORF">F1C12.195</name>
</gene>
<comment type="function">
    <text evidence="1">TAFs are components of the transcription factor IID (TFIID) complex that is essential for mediating regulation of RNA polymerase transcription.</text>
</comment>
<comment type="subunit">
    <text evidence="4">Component of the TFIID complex. TFIID is composed of TATA binding protein (TBP) and a number of TBP-associated factors (TAFs) whose MWs range from 14-217 kDa. Interacts with TAF12, TAF12B and TAF13.</text>
</comment>
<comment type="interaction">
    <interactant intactId="EBI-1247587">
        <id>Q9M565</id>
    </interactant>
    <interactant intactId="EBI-2126009">
        <id>Q9SLG0</id>
        <label>NFYB1</label>
    </interactant>
    <organismsDiffer>false</organismsDiffer>
    <experiments>3</experiments>
</comment>
<comment type="subcellular location">
    <subcellularLocation>
        <location evidence="5">Nucleus</location>
    </subcellularLocation>
</comment>
<comment type="tissue specificity">
    <text evidence="3">Expressed in roots, leaves and inflorescences.</text>
</comment>
<comment type="similarity">
    <text evidence="5">Belongs to the TAF11 family.</text>
</comment>
<comment type="sequence caution" evidence="5">
    <conflict type="erroneous gene model prediction">
        <sequence resource="EMBL-CDS" id="CAA18253"/>
    </conflict>
</comment>
<comment type="sequence caution" evidence="5">
    <conflict type="erroneous gene model prediction">
        <sequence resource="EMBL-CDS" id="CAB79028"/>
    </conflict>
</comment>